<gene>
    <name evidence="11" type="primary">aauA</name>
</gene>
<organism>
    <name type="scientific">Alcaligenes faecalis</name>
    <dbReference type="NCBI Taxonomy" id="511"/>
    <lineage>
        <taxon>Bacteria</taxon>
        <taxon>Pseudomonadati</taxon>
        <taxon>Pseudomonadota</taxon>
        <taxon>Betaproteobacteria</taxon>
        <taxon>Burkholderiales</taxon>
        <taxon>Alcaligenaceae</taxon>
        <taxon>Alcaligenes</taxon>
    </lineage>
</organism>
<comment type="function">
    <text evidence="3 4 5 6 7 8 9">Oxidizes primary aromatic amines and, more slowly, some long-chain aliphatic amines, but not methylamine or ethylamine. Uses azurin as an electron acceptor to transfer electrons from the reduced tryptophylquinone cofactor.</text>
</comment>
<comment type="catalytic activity">
    <reaction evidence="4 10">
        <text>an aralkylamine + 2 oxidized [azurin] + H2O = an aromatic aldehyde + 2 reduced [azurin] + NH4(+) + 2 H(+)</text>
        <dbReference type="Rhea" id="RHEA:47796"/>
        <dbReference type="Rhea" id="RHEA-COMP:11034"/>
        <dbReference type="Rhea" id="RHEA-COMP:11035"/>
        <dbReference type="ChEBI" id="CHEBI:15377"/>
        <dbReference type="ChEBI" id="CHEBI:15378"/>
        <dbReference type="ChEBI" id="CHEBI:28938"/>
        <dbReference type="ChEBI" id="CHEBI:29036"/>
        <dbReference type="ChEBI" id="CHEBI:33855"/>
        <dbReference type="ChEBI" id="CHEBI:49552"/>
        <dbReference type="ChEBI" id="CHEBI:88332"/>
        <dbReference type="EC" id="1.4.9.2"/>
    </reaction>
</comment>
<comment type="cofactor">
    <cofactor evidence="4 5 6 7 9">
        <name>tryptophan tryptophylquinone residue</name>
        <dbReference type="ChEBI" id="CHEBI:20251"/>
    </cofactor>
    <text evidence="4 5 6 7 9">Uses a protein-derived tryptophan tryptophylquinone (TTQ) cofactor.</text>
</comment>
<comment type="activity regulation">
    <text evidence="9">Irreversibly inhibited by phenylhydrazine, hydroxylamine, semicarbazide, hydrazine and aminoguanidine. Reversibly inhibited by isonicotinic acid hydrazide (isoniazid) and isonicotinic acid 2-isopropyl hydrazide (iproniazid).</text>
</comment>
<comment type="biophysicochemical properties">
    <absorption>
        <max evidence="4 7 9">465 nm</max>
        <text evidence="4 7">The above maximum is for the oxidized form. Shows a maximal peak at 330 nm in the reduced form. These absorption peaks are for the tryptophylquinone cofactor.</text>
    </absorption>
    <kinetics>
        <KM evidence="4 7 9">5.4 uM for tyramine</KM>
        <Vmax evidence="4 7 9">17.0 umol/min/mg enzyme</Vmax>
        <text evidence="9">The enzyme is substrate inhibited at high substrate concentrations (Ki=1.08 mM for tyramine).</text>
    </kinetics>
</comment>
<comment type="subunit">
    <text evidence="5 6 7 8 9">Heterotetramer of two light and two heavy chains. Binds two azurin molecules per heterotetramer.</text>
</comment>
<comment type="subcellular location">
    <subcellularLocation>
        <location evidence="2 4">Periplasm</location>
    </subcellularLocation>
</comment>
<comment type="PTM">
    <text evidence="5 6 7 9">Tryptophan tryptophylquinone (TTQ) is formed by oxidation of the indole ring of a tryptophan to form tryptophylquinone followed by covalent cross-linking with another tryptophan residue.</text>
</comment>
<comment type="PTM">
    <text>Predicted to be exported by the Tat system. The position of the signal peptide cleavage has been experimentally proven.</text>
</comment>
<comment type="similarity">
    <text evidence="12">Belongs to the aromatic amine dehydrogenase light chain family.</text>
</comment>
<keyword id="KW-0002">3D-structure</keyword>
<keyword id="KW-0903">Direct protein sequencing</keyword>
<keyword id="KW-1015">Disulfide bond</keyword>
<keyword id="KW-0249">Electron transport</keyword>
<keyword id="KW-0560">Oxidoreductase</keyword>
<keyword id="KW-0574">Periplasm</keyword>
<keyword id="KW-0732">Signal</keyword>
<keyword id="KW-0813">Transport</keyword>
<keyword id="KW-0824">TTQ</keyword>
<dbReference type="EC" id="1.4.9.2"/>
<dbReference type="EMBL" id="AF302652">
    <property type="status" value="NOT_ANNOTATED_CDS"/>
    <property type="molecule type" value="Genomic_DNA"/>
</dbReference>
<dbReference type="EMBL" id="AM292629">
    <property type="protein sequence ID" value="CAL23525.1"/>
    <property type="molecule type" value="Genomic_DNA"/>
</dbReference>
<dbReference type="RefSeq" id="WP_021447059.1">
    <property type="nucleotide sequence ID" value="NZ_SRIW01000016.1"/>
</dbReference>
<dbReference type="PDB" id="2AGL">
    <property type="method" value="X-ray"/>
    <property type="resolution" value="1.40 A"/>
    <property type="chains" value="D/H=48-182"/>
</dbReference>
<dbReference type="PDB" id="2AGW">
    <property type="method" value="X-ray"/>
    <property type="resolution" value="1.45 A"/>
    <property type="chains" value="D/H=48-182"/>
</dbReference>
<dbReference type="PDB" id="2AGX">
    <property type="method" value="X-ray"/>
    <property type="resolution" value="2.20 A"/>
    <property type="chains" value="D/H=48-182"/>
</dbReference>
<dbReference type="PDB" id="2AGY">
    <property type="method" value="X-ray"/>
    <property type="resolution" value="1.10 A"/>
    <property type="chains" value="D/H=48-182"/>
</dbReference>
<dbReference type="PDB" id="2AGZ">
    <property type="method" value="X-ray"/>
    <property type="resolution" value="1.60 A"/>
    <property type="chains" value="D/H=48-182"/>
</dbReference>
<dbReference type="PDB" id="2AH0">
    <property type="method" value="X-ray"/>
    <property type="resolution" value="1.45 A"/>
    <property type="chains" value="D/H=48-182"/>
</dbReference>
<dbReference type="PDB" id="2AH1">
    <property type="method" value="X-ray"/>
    <property type="resolution" value="1.20 A"/>
    <property type="chains" value="D/H=48-182"/>
</dbReference>
<dbReference type="PDB" id="2H3X">
    <property type="method" value="X-ray"/>
    <property type="resolution" value="2.50 A"/>
    <property type="chains" value="B/E=48-182"/>
</dbReference>
<dbReference type="PDB" id="2H47">
    <property type="method" value="X-ray"/>
    <property type="resolution" value="2.60 A"/>
    <property type="chains" value="B/E/G/I=48-182"/>
</dbReference>
<dbReference type="PDB" id="2HJ4">
    <property type="method" value="X-ray"/>
    <property type="resolution" value="1.80 A"/>
    <property type="chains" value="D/H=48-182"/>
</dbReference>
<dbReference type="PDB" id="2HJB">
    <property type="method" value="X-ray"/>
    <property type="resolution" value="1.85 A"/>
    <property type="chains" value="D/H=48-182"/>
</dbReference>
<dbReference type="PDB" id="2HKM">
    <property type="method" value="X-ray"/>
    <property type="resolution" value="1.50 A"/>
    <property type="chains" value="D/H=48-182"/>
</dbReference>
<dbReference type="PDB" id="2HKR">
    <property type="method" value="X-ray"/>
    <property type="resolution" value="1.40 A"/>
    <property type="chains" value="D/H=59-180"/>
</dbReference>
<dbReference type="PDB" id="2HXC">
    <property type="method" value="X-ray"/>
    <property type="resolution" value="1.45 A"/>
    <property type="chains" value="D/H=48-182"/>
</dbReference>
<dbReference type="PDB" id="2I0R">
    <property type="method" value="X-ray"/>
    <property type="resolution" value="1.40 A"/>
    <property type="chains" value="D/H=59-182"/>
</dbReference>
<dbReference type="PDB" id="2I0S">
    <property type="method" value="X-ray"/>
    <property type="resolution" value="1.40 A"/>
    <property type="chains" value="D/H=59-182"/>
</dbReference>
<dbReference type="PDB" id="2I0T">
    <property type="method" value="X-ray"/>
    <property type="resolution" value="1.35 A"/>
    <property type="chains" value="D/H=59-180"/>
</dbReference>
<dbReference type="PDB" id="2IAA">
    <property type="method" value="X-ray"/>
    <property type="resolution" value="1.95 A"/>
    <property type="chains" value="B/E=48-182"/>
</dbReference>
<dbReference type="PDB" id="2IUP">
    <property type="method" value="X-ray"/>
    <property type="resolution" value="1.80 A"/>
    <property type="chains" value="D/H=48-182"/>
</dbReference>
<dbReference type="PDB" id="2IUQ">
    <property type="method" value="X-ray"/>
    <property type="resolution" value="1.50 A"/>
    <property type="chains" value="D/H=48-182"/>
</dbReference>
<dbReference type="PDB" id="2IUR">
    <property type="method" value="X-ray"/>
    <property type="resolution" value="1.30 A"/>
    <property type="chains" value="D/H=48-182"/>
</dbReference>
<dbReference type="PDB" id="2IUV">
    <property type="method" value="X-ray"/>
    <property type="resolution" value="1.55 A"/>
    <property type="chains" value="D/H=48-182"/>
</dbReference>
<dbReference type="PDB" id="2OIZ">
    <property type="method" value="X-ray"/>
    <property type="resolution" value="1.05 A"/>
    <property type="chains" value="D/H=48-182"/>
</dbReference>
<dbReference type="PDB" id="2OJY">
    <property type="method" value="X-ray"/>
    <property type="resolution" value="1.60 A"/>
    <property type="chains" value="D/H=48-180"/>
</dbReference>
<dbReference type="PDB" id="2OK4">
    <property type="method" value="X-ray"/>
    <property type="resolution" value="1.45 A"/>
    <property type="chains" value="D/H=48-182"/>
</dbReference>
<dbReference type="PDB" id="2OK6">
    <property type="method" value="X-ray"/>
    <property type="resolution" value="1.45 A"/>
    <property type="chains" value="D/H=48-182"/>
</dbReference>
<dbReference type="PDB" id="2Q7Q">
    <property type="method" value="X-ray"/>
    <property type="resolution" value="1.60 A"/>
    <property type="chains" value="D/H=59-182"/>
</dbReference>
<dbReference type="PDBsum" id="2AGL"/>
<dbReference type="PDBsum" id="2AGW"/>
<dbReference type="PDBsum" id="2AGX"/>
<dbReference type="PDBsum" id="2AGY"/>
<dbReference type="PDBsum" id="2AGZ"/>
<dbReference type="PDBsum" id="2AH0"/>
<dbReference type="PDBsum" id="2AH1"/>
<dbReference type="PDBsum" id="2H3X"/>
<dbReference type="PDBsum" id="2H47"/>
<dbReference type="PDBsum" id="2HJ4"/>
<dbReference type="PDBsum" id="2HJB"/>
<dbReference type="PDBsum" id="2HKM"/>
<dbReference type="PDBsum" id="2HKR"/>
<dbReference type="PDBsum" id="2HXC"/>
<dbReference type="PDBsum" id="2I0R"/>
<dbReference type="PDBsum" id="2I0S"/>
<dbReference type="PDBsum" id="2I0T"/>
<dbReference type="PDBsum" id="2IAA"/>
<dbReference type="PDBsum" id="2IUP"/>
<dbReference type="PDBsum" id="2IUQ"/>
<dbReference type="PDBsum" id="2IUR"/>
<dbReference type="PDBsum" id="2IUV"/>
<dbReference type="PDBsum" id="2OIZ"/>
<dbReference type="PDBsum" id="2OJY"/>
<dbReference type="PDBsum" id="2OK4"/>
<dbReference type="PDBsum" id="2OK6"/>
<dbReference type="PDBsum" id="2Q7Q"/>
<dbReference type="SMR" id="P84887"/>
<dbReference type="STRING" id="511.UZ73_08875"/>
<dbReference type="DrugBank" id="DB08649">
    <property type="generic name" value="(1S)-1-AMINO-2-(1H-INDOL-3-YL)ETHANOL"/>
</dbReference>
<dbReference type="DrugBank" id="DB08767">
    <property type="generic name" value="2-(4-METHOXYPHENYL)ACETAMIDE"/>
</dbReference>
<dbReference type="DrugBank" id="DB08652">
    <property type="generic name" value="Indoleacetamide"/>
</dbReference>
<dbReference type="DrugBank" id="DB08653">
    <property type="generic name" value="Tryptamine"/>
</dbReference>
<dbReference type="KEGG" id="ag:CAL23525"/>
<dbReference type="eggNOG" id="ENOG502ZHBX">
    <property type="taxonomic scope" value="Bacteria"/>
</dbReference>
<dbReference type="OrthoDB" id="7628766at2"/>
<dbReference type="BioCyc" id="MetaCyc:MONOMER-16554"/>
<dbReference type="BRENDA" id="1.4.9.2">
    <property type="organism ID" value="232"/>
</dbReference>
<dbReference type="SABIO-RK" id="P84887"/>
<dbReference type="EvolutionaryTrace" id="P84887"/>
<dbReference type="GO" id="GO:0042597">
    <property type="term" value="C:periplasmic space"/>
    <property type="evidence" value="ECO:0007669"/>
    <property type="project" value="UniProtKB-SubCell"/>
</dbReference>
<dbReference type="GO" id="GO:0030058">
    <property type="term" value="F:aliphatic amine dehydrogenase activity"/>
    <property type="evidence" value="ECO:0007669"/>
    <property type="project" value="InterPro"/>
</dbReference>
<dbReference type="GO" id="GO:0030059">
    <property type="term" value="F:aralkylamine dehydrogenase (azurin) activity"/>
    <property type="evidence" value="ECO:0007669"/>
    <property type="project" value="UniProtKB-EC"/>
</dbReference>
<dbReference type="GO" id="GO:0009308">
    <property type="term" value="P:amine metabolic process"/>
    <property type="evidence" value="ECO:0007669"/>
    <property type="project" value="InterPro"/>
</dbReference>
<dbReference type="Gene3D" id="2.60.30.10">
    <property type="entry name" value="Methylamine/Aralkylamine dehydrogenase light chain"/>
    <property type="match status" value="1"/>
</dbReference>
<dbReference type="InterPro" id="IPR016008">
    <property type="entry name" value="Amine_DH_Ltc"/>
</dbReference>
<dbReference type="InterPro" id="IPR036560">
    <property type="entry name" value="MADH/AADH_L_sf"/>
</dbReference>
<dbReference type="InterPro" id="IPR013504">
    <property type="entry name" value="MADH/AADH_Ltc_C_dom"/>
</dbReference>
<dbReference type="InterPro" id="IPR006311">
    <property type="entry name" value="TAT_signal"/>
</dbReference>
<dbReference type="Pfam" id="PF02975">
    <property type="entry name" value="Me-amine-dh_L"/>
    <property type="match status" value="1"/>
</dbReference>
<dbReference type="PIRSF" id="PIRSF000192">
    <property type="entry name" value="Amine_dh_beta"/>
    <property type="match status" value="1"/>
</dbReference>
<dbReference type="SUPFAM" id="SSF57561">
    <property type="entry name" value="Methylamine dehydrogenase, L chain"/>
    <property type="match status" value="1"/>
</dbReference>
<dbReference type="PROSITE" id="PS51318">
    <property type="entry name" value="TAT"/>
    <property type="match status" value="1"/>
</dbReference>
<reference evidence="12" key="1">
    <citation type="journal article" date="2001" name="Microbiology">
        <title>Cloning, sequencing and mutagenesis of the genes for aromatic amine dehydrogenase from Alcaligenes faecalis and evolution of amine dehydrogenases.</title>
        <authorList>
            <person name="Chistoserdov A.Y."/>
        </authorList>
    </citation>
    <scope>NUCLEOTIDE SEQUENCE [GENOMIC DNA]</scope>
    <scope>FUNCTION</scope>
</reference>
<reference evidence="12 13" key="2">
    <citation type="journal article" date="2005" name="FEBS J.">
        <title>Tryptophan tryptophylquinone cofactor biogenesis in the aromatic amine dehydrogenase of Alcaligenes faecalis. Cofactor assembly and catalytic properties of recombinant enzyme expressed in Paracoccus denitrificans.</title>
        <authorList>
            <person name="Hothi P."/>
            <person name="Khadra K.A."/>
            <person name="Combe J.P."/>
            <person name="Leys D."/>
            <person name="Scrutton N.S."/>
        </authorList>
    </citation>
    <scope>NUCLEOTIDE SEQUENCE [GENOMIC DNA]</scope>
    <scope>PROTEIN SEQUENCE OF 48-53</scope>
    <scope>FUNCTION</scope>
    <scope>CATALYTIC ACTIVITY</scope>
    <scope>COFACTOR</scope>
    <scope>BIOPHYSICOCHEMICAL PROPERTIES</scope>
    <scope>SUBCELLULAR LOCATION</scope>
    <source>
        <strain evidence="4 13">ATCC 49677 / NBRC 14479</strain>
    </source>
</reference>
<reference evidence="12" key="3">
    <citation type="journal article" date="1994" name="J. Bacteriol.">
        <title>Aromatic amine dehydrogenase, a second tryptophan tryptophylquinone enzyme.</title>
        <authorList>
            <person name="Govindaraj S."/>
            <person name="Eisenstein E."/>
            <person name="Jones L.H."/>
            <person name="Sanders-Loehr J."/>
            <person name="Chistoserdov A.Y."/>
            <person name="Davidson V.L."/>
            <person name="Edwards S.L."/>
        </authorList>
    </citation>
    <scope>PROTEIN SEQUENCE OF 48-64</scope>
    <scope>FUNCTION</scope>
    <scope>COFACTOR</scope>
    <scope>ACTIVITY REGULATION</scope>
    <scope>BIOPHYSICOCHEMICAL PROPERTIES</scope>
    <scope>SUBUNIT</scope>
    <source>
        <strain evidence="9">ATCC 49677 / NBRC 14479</strain>
    </source>
</reference>
<reference evidence="12" key="4">
    <citation type="journal article" date="1995" name="J. Biol. Chem.">
        <title>Spectroscopic evidence for a common electron transfer pathway for two tryptophan tryptophylquinone enzymes.</title>
        <authorList>
            <person name="Edwards S.L."/>
            <person name="Davidson V.L."/>
            <person name="Hyun Y.-L."/>
            <person name="Wingfield P.T."/>
        </authorList>
    </citation>
    <scope>FUNCTION</scope>
    <scope>SUBUNIT</scope>
</reference>
<reference evidence="12" key="5">
    <citation type="journal article" date="1998" name="Biochem. J.">
        <title>Identification of reaction products and intermediates of aromatic-amine dehydrogenase by 15N and 13C NMR.</title>
        <authorList>
            <person name="Bishop G.R."/>
            <person name="Zhu Z."/>
            <person name="Whitehead T.L."/>
            <person name="Hicks R.P."/>
            <person name="Davidson V.L."/>
        </authorList>
    </citation>
    <scope>CATALYTIC ACTIVITY</scope>
    <source>
        <strain evidence="10">ATCC 49677 / NBRC 14479</strain>
    </source>
</reference>
<reference evidence="12" key="6">
    <citation type="journal article" date="1999" name="J. Bacteriol.">
        <title>Localization of periplasmic redox proteins of Alcaligenes faecalis by a modified general method for fractionating Gram-negative bacteria.</title>
        <authorList>
            <person name="Zhu Z."/>
            <person name="Sun D."/>
            <person name="Davidson V.L."/>
        </authorList>
    </citation>
    <scope>SUBCELLULAR LOCATION</scope>
</reference>
<reference evidence="12" key="7">
    <citation type="journal article" date="2006" name="Biochemistry">
        <title>Crystal structure of an electron transfer complex between aromatic amine dehydrogenase and azurin from Alcaligenes faecalis.</title>
        <authorList>
            <person name="Sukumar N."/>
            <person name="Chen Z.-W."/>
            <person name="Ferrari D."/>
            <person name="Merli A."/>
            <person name="Rossi G.L."/>
            <person name="Bellamy H.D."/>
            <person name="Chistoserdov A.Y."/>
            <person name="Davidson V.L."/>
            <person name="Mathews F.S."/>
        </authorList>
    </citation>
    <scope>X-RAY CRYSTALLOGRAPHY (2.5 ANGSTROMS) OF 48-182 IN COMPLEX WITH AAUB AND AZURIN</scope>
    <scope>FUNCTION</scope>
    <scope>COFACTOR</scope>
    <scope>BIOPHYSICOCHEMICAL PROPERTIES</scope>
    <scope>SUBUNIT</scope>
    <scope>DISULFIDE BONDS</scope>
    <source>
        <strain evidence="7">ATCC 49677 / NBRC 14479</strain>
    </source>
</reference>
<reference evidence="12" key="8">
    <citation type="journal article" date="2006" name="J. Biol. Chem.">
        <title>Atomic level insight into the oxidative half-reaction of aromatic amine dehydrogenase.</title>
        <authorList>
            <person name="Roujeinikova A."/>
            <person name="Scrutton N.S."/>
            <person name="Leys D."/>
        </authorList>
    </citation>
    <scope>X-RAY CRYSTALLOGRAPHY (1.3 ANGSTROMS) OF 48-182 IN COMPLEX WITH AAUB AND SUBSTRATE</scope>
    <scope>FUNCTION</scope>
    <scope>COFACTOR</scope>
    <scope>SUBUNIT</scope>
    <scope>DISULFIDE BONDS</scope>
    <source>
        <strain evidence="6">ATCC 49677 / NBRC 14479</strain>
    </source>
</reference>
<reference evidence="12" key="9">
    <citation type="journal article" date="2006" name="Science">
        <title>Atomic description of an enzyme reaction dominated by proton tunneling.</title>
        <authorList>
            <person name="Masgrau L."/>
            <person name="Roujeinikova A."/>
            <person name="Johannissen L.O."/>
            <person name="Hothi P."/>
            <person name="Basran J."/>
            <person name="Ranaghan K.E."/>
            <person name="Mulholland A.J."/>
            <person name="Sutcliffe M.J."/>
            <person name="Scrutton N.S."/>
            <person name="Leys D."/>
        </authorList>
    </citation>
    <scope>X-RAY CRYSTALLOGRAPHY (1.40 ANGSTROMS) OF 48-182 IN COMPLEX WITH AAUB AND SUBSTRATE</scope>
    <scope>FUNCTION</scope>
    <scope>COFACTOR</scope>
    <scope>SUBUNIT</scope>
    <scope>DISULFIDE BONDS</scope>
    <source>
        <strain evidence="5">ATCC 49677 / NBRC 14479</strain>
    </source>
</reference>
<feature type="signal peptide" description="Tat-type signal" evidence="1 4 9">
    <location>
        <begin position="1"/>
        <end position="47"/>
    </location>
</feature>
<feature type="chain" id="PRO_0000287911" description="Aralkylamine dehydrogenase light chain" evidence="1 9">
    <location>
        <begin position="48"/>
        <end position="182"/>
    </location>
</feature>
<feature type="active site" description="Tryptophylquinone 6'-substrate hemiaminal intermediate">
    <location>
        <position position="109"/>
    </location>
</feature>
<feature type="active site" description="Proton acceptor" evidence="5 6">
    <location>
        <position position="128"/>
    </location>
</feature>
<feature type="binding site" evidence="5 6">
    <location>
        <position position="84"/>
    </location>
    <ligand>
        <name>substrate</name>
    </ligand>
</feature>
<feature type="binding site" evidence="5 6">
    <location>
        <begin position="156"/>
        <end position="158"/>
    </location>
    <ligand>
        <name>substrate</name>
    </ligand>
</feature>
<feature type="site" description="Transition state stabilizer">
    <location>
        <position position="172"/>
    </location>
</feature>
<feature type="modified residue" description="Tryptophylquinone" evidence="5 6 7">
    <location>
        <position position="109"/>
    </location>
</feature>
<feature type="disulfide bond" evidence="5 6 7">
    <location>
        <begin position="75"/>
        <end position="140"/>
    </location>
</feature>
<feature type="disulfide bond" evidence="5 6 7">
    <location>
        <begin position="81"/>
        <end position="113"/>
    </location>
</feature>
<feature type="disulfide bond" evidence="5 6 7">
    <location>
        <begin position="88"/>
        <end position="171"/>
    </location>
</feature>
<feature type="disulfide bond" evidence="5 6 7">
    <location>
        <begin position="90"/>
        <end position="138"/>
    </location>
</feature>
<feature type="disulfide bond" evidence="5 6 7">
    <location>
        <begin position="91"/>
        <end position="135"/>
    </location>
</feature>
<feature type="disulfide bond" evidence="5 6 7">
    <location>
        <begin position="98"/>
        <end position="129"/>
    </location>
</feature>
<feature type="disulfide bond" evidence="5 6 7">
    <location>
        <begin position="130"/>
        <end position="161"/>
    </location>
</feature>
<feature type="cross-link" description="Tryptophan tryptophylquinone (Trp-Trp)" evidence="5 6 7">
    <location>
        <begin position="109"/>
        <end position="160"/>
    </location>
</feature>
<feature type="helix" evidence="16">
    <location>
        <begin position="60"/>
        <end position="62"/>
    </location>
</feature>
<feature type="helix" evidence="16">
    <location>
        <begin position="64"/>
        <end position="66"/>
    </location>
</feature>
<feature type="helix" evidence="14">
    <location>
        <begin position="69"/>
        <end position="72"/>
    </location>
</feature>
<feature type="helix" evidence="16">
    <location>
        <begin position="78"/>
        <end position="80"/>
    </location>
</feature>
<feature type="strand" evidence="16">
    <location>
        <begin position="84"/>
        <end position="87"/>
    </location>
</feature>
<feature type="helix" evidence="16">
    <location>
        <begin position="88"/>
        <end position="90"/>
    </location>
</feature>
<feature type="strand" evidence="15">
    <location>
        <begin position="95"/>
        <end position="97"/>
    </location>
</feature>
<feature type="strand" evidence="16">
    <location>
        <begin position="109"/>
        <end position="114"/>
    </location>
</feature>
<feature type="turn" evidence="16">
    <location>
        <begin position="116"/>
        <end position="118"/>
    </location>
</feature>
<feature type="strand" evidence="16">
    <location>
        <begin position="121"/>
        <end position="126"/>
    </location>
</feature>
<feature type="strand" evidence="16">
    <location>
        <begin position="128"/>
        <end position="132"/>
    </location>
</feature>
<feature type="strand" evidence="16">
    <location>
        <begin position="137"/>
        <end position="141"/>
    </location>
</feature>
<feature type="helix" evidence="16">
    <location>
        <begin position="149"/>
        <end position="154"/>
    </location>
</feature>
<feature type="turn" evidence="16">
    <location>
        <begin position="160"/>
        <end position="163"/>
    </location>
</feature>
<feature type="strand" evidence="16">
    <location>
        <begin position="164"/>
        <end position="166"/>
    </location>
</feature>
<feature type="strand" evidence="16">
    <location>
        <begin position="169"/>
        <end position="172"/>
    </location>
</feature>
<feature type="strand" evidence="16">
    <location>
        <begin position="175"/>
        <end position="179"/>
    </location>
</feature>
<accession>P84887</accession>
<accession>Q0VKG6</accession>
<proteinExistence type="evidence at protein level"/>
<evidence type="ECO:0000255" key="1">
    <source>
        <dbReference type="PROSITE-ProRule" id="PRU00648"/>
    </source>
</evidence>
<evidence type="ECO:0000269" key="2">
    <source>
    </source>
</evidence>
<evidence type="ECO:0000269" key="3">
    <source>
    </source>
</evidence>
<evidence type="ECO:0000269" key="4">
    <source>
    </source>
</evidence>
<evidence type="ECO:0000269" key="5">
    <source>
    </source>
</evidence>
<evidence type="ECO:0000269" key="6">
    <source>
    </source>
</evidence>
<evidence type="ECO:0000269" key="7">
    <source>
    </source>
</evidence>
<evidence type="ECO:0000269" key="8">
    <source>
    </source>
</evidence>
<evidence type="ECO:0000269" key="9">
    <source>
    </source>
</evidence>
<evidence type="ECO:0000269" key="10">
    <source>
    </source>
</evidence>
<evidence type="ECO:0000303" key="11">
    <source>
    </source>
</evidence>
<evidence type="ECO:0000305" key="12"/>
<evidence type="ECO:0000312" key="13">
    <source>
        <dbReference type="EMBL" id="CAL23525.1"/>
    </source>
</evidence>
<evidence type="ECO:0007829" key="14">
    <source>
        <dbReference type="PDB" id="2I0T"/>
    </source>
</evidence>
<evidence type="ECO:0007829" key="15">
    <source>
        <dbReference type="PDB" id="2IAA"/>
    </source>
</evidence>
<evidence type="ECO:0007829" key="16">
    <source>
        <dbReference type="PDB" id="2OIZ"/>
    </source>
</evidence>
<protein>
    <recommendedName>
        <fullName>Aralkylamine dehydrogenase light chain</fullName>
        <ecNumber>1.4.9.2</ecNumber>
    </recommendedName>
    <alternativeName>
        <fullName>Aromatic amine dehydrogenase</fullName>
        <shortName>AADH</shortName>
    </alternativeName>
</protein>
<name>AAUA_ALCFA</name>
<sequence>MRWLDKFGESLSRSVAHKTSRRSVLRSVGKLMVGSAFVLPVLPVARAAGGGGSSSGADHISLNPDLANEDEVNSCDYWRHCAVDGFLCSCCGGTTTTCPPGSTPSPISWIGTCHNPHDGKDYLISYHDCCGKTACGRCQCNTQTRERPGYEFFLHNDVNWCMANENSTFHCTTSVLVGLAKN</sequence>